<proteinExistence type="predicted"/>
<sequence>MASKITGKGSFRGVPFLIEEEQGLDGGRRIVSHEYPLRDEGLTEDMGKRLRRYQVSCLVIGDDHLAQAEKLIDALEASGAGTLKHPYFGTIEVRVDDYRAKNSTNHQRVTRFDINFLPAIEKNAPEIAEDTAYSVLSEYQATLNSLSDEFAEMVQDVSGFIESMVDNPLFRLADTTAAFIENIFEGVANTVSGLTEVKDKALSIKNRLSNLLLTPKVLAYELQQLTRLNVRSAVNSQRQFVQHIVITDSISSALGDLTATKNEISKSTLDEMVTAKTNNVAETEILARQFKNLHEQEIFDALMNKTTFLLKRLVLSTLAVEYGKAISDAVTESVAQKTVTEETIATLIESKTDVQRYIAEVDEQLEAVILDNADAEQWTSYAALEQYRLTLMRDLQIRGERLANAIEVKLNDTYPAILLEYRHTGNSKTWKRLALRNGISHPLFCLGGTTLEVLQ</sequence>
<evidence type="ECO:0000255" key="1"/>
<evidence type="ECO:0000305" key="2"/>
<protein>
    <recommendedName>
        <fullName>Mu-like prophage FluMu DNA circularization protein</fullName>
    </recommendedName>
</protein>
<organism>
    <name type="scientific">Haemophilus influenzae (strain ATCC 51907 / DSM 11121 / KW20 / Rd)</name>
    <dbReference type="NCBI Taxonomy" id="71421"/>
    <lineage>
        <taxon>Bacteria</taxon>
        <taxon>Pseudomonadati</taxon>
        <taxon>Pseudomonadota</taxon>
        <taxon>Gammaproteobacteria</taxon>
        <taxon>Pasteurellales</taxon>
        <taxon>Pasteurellaceae</taxon>
        <taxon>Haemophilus</taxon>
    </lineage>
</organism>
<gene>
    <name type="ordered locus">HI_1515</name>
</gene>
<dbReference type="EMBL" id="L42023">
    <property type="protein sequence ID" value="AAC23161.1"/>
    <property type="molecule type" value="Genomic_DNA"/>
</dbReference>
<dbReference type="RefSeq" id="NP_439665.1">
    <property type="nucleotide sequence ID" value="NC_000907.1"/>
</dbReference>
<dbReference type="STRING" id="71421.HI_1515"/>
<dbReference type="EnsemblBacteria" id="AAC23161">
    <property type="protein sequence ID" value="AAC23161"/>
    <property type="gene ID" value="HI_1515"/>
</dbReference>
<dbReference type="KEGG" id="hin:HI_1515"/>
<dbReference type="PATRIC" id="fig|71421.8.peg.1585"/>
<dbReference type="eggNOG" id="COG4228">
    <property type="taxonomic scope" value="Bacteria"/>
</dbReference>
<dbReference type="HOGENOM" id="CLU_046832_0_0_6"/>
<dbReference type="OrthoDB" id="378644at2"/>
<dbReference type="BioCyc" id="HINF71421:G1GJ1-1538-MONOMER"/>
<dbReference type="Proteomes" id="UP000000579">
    <property type="component" value="Chromosome"/>
</dbReference>
<dbReference type="GO" id="GO:0003677">
    <property type="term" value="F:DNA binding"/>
    <property type="evidence" value="ECO:0007669"/>
    <property type="project" value="UniProtKB-KW"/>
</dbReference>
<dbReference type="GO" id="GO:0046718">
    <property type="term" value="P:symbiont entry into host cell"/>
    <property type="evidence" value="ECO:0007669"/>
    <property type="project" value="UniProtKB-KW"/>
</dbReference>
<dbReference type="GO" id="GO:0099009">
    <property type="term" value="P:viral genome circularization"/>
    <property type="evidence" value="ECO:0007669"/>
    <property type="project" value="UniProtKB-KW"/>
</dbReference>
<dbReference type="InterPro" id="IPR009826">
    <property type="entry name" value="DNA_circ_N"/>
</dbReference>
<dbReference type="Pfam" id="PF07157">
    <property type="entry name" value="DNA_circ_N"/>
    <property type="match status" value="1"/>
</dbReference>
<accession>P71389</accession>
<feature type="chain" id="PRO_0000077691" description="Mu-like prophage FluMu DNA circularization protein">
    <location>
        <begin position="1"/>
        <end position="455"/>
    </location>
</feature>
<feature type="DNA-binding region" description="H-T-H motif" evidence="1">
    <location>
        <begin position="368"/>
        <end position="387"/>
    </location>
</feature>
<comment type="similarity">
    <text evidence="2">To phage Mu protein N.</text>
</comment>
<name>VPN_HAEIN</name>
<keyword id="KW-0238">DNA-binding</keyword>
<keyword id="KW-1185">Reference proteome</keyword>
<keyword id="KW-1253">Viral genome circularization</keyword>
<keyword id="KW-1160">Virus entry into host cell</keyword>
<reference key="1">
    <citation type="journal article" date="1995" name="Science">
        <title>Whole-genome random sequencing and assembly of Haemophilus influenzae Rd.</title>
        <authorList>
            <person name="Fleischmann R.D."/>
            <person name="Adams M.D."/>
            <person name="White O."/>
            <person name="Clayton R.A."/>
            <person name="Kirkness E.F."/>
            <person name="Kerlavage A.R."/>
            <person name="Bult C.J."/>
            <person name="Tomb J.-F."/>
            <person name="Dougherty B.A."/>
            <person name="Merrick J.M."/>
            <person name="McKenney K."/>
            <person name="Sutton G.G."/>
            <person name="FitzHugh W."/>
            <person name="Fields C.A."/>
            <person name="Gocayne J.D."/>
            <person name="Scott J.D."/>
            <person name="Shirley R."/>
            <person name="Liu L.-I."/>
            <person name="Glodek A."/>
            <person name="Kelley J.M."/>
            <person name="Weidman J.F."/>
            <person name="Phillips C.A."/>
            <person name="Spriggs T."/>
            <person name="Hedblom E."/>
            <person name="Cotton M.D."/>
            <person name="Utterback T.R."/>
            <person name="Hanna M.C."/>
            <person name="Nguyen D.T."/>
            <person name="Saudek D.M."/>
            <person name="Brandon R.C."/>
            <person name="Fine L.D."/>
            <person name="Fritchman J.L."/>
            <person name="Fuhrmann J.L."/>
            <person name="Geoghagen N.S.M."/>
            <person name="Gnehm C.L."/>
            <person name="McDonald L.A."/>
            <person name="Small K.V."/>
            <person name="Fraser C.M."/>
            <person name="Smith H.O."/>
            <person name="Venter J.C."/>
        </authorList>
    </citation>
    <scope>NUCLEOTIDE SEQUENCE [LARGE SCALE GENOMIC DNA]</scope>
    <source>
        <strain>ATCC 51907 / DSM 11121 / KW20 / Rd</strain>
    </source>
</reference>